<reference key="1">
    <citation type="journal article" date="2011" name="J. Bacteriol.">
        <title>Genome of Ochrobactrum anthropi ATCC 49188 T, a versatile opportunistic pathogen and symbiont of several eukaryotic hosts.</title>
        <authorList>
            <person name="Chain P.S."/>
            <person name="Lang D.M."/>
            <person name="Comerci D.J."/>
            <person name="Malfatti S.A."/>
            <person name="Vergez L.M."/>
            <person name="Shin M."/>
            <person name="Ugalde R.A."/>
            <person name="Garcia E."/>
            <person name="Tolmasky M.E."/>
        </authorList>
    </citation>
    <scope>NUCLEOTIDE SEQUENCE [LARGE SCALE GENOMIC DNA]</scope>
    <source>
        <strain>ATCC 49188 / DSM 6882 / CCUG 24695 / JCM 21032 / LMG 3331 / NBRC 15819 / NCTC 12168 / Alc 37</strain>
    </source>
</reference>
<name>TIG_BRUA4</name>
<protein>
    <recommendedName>
        <fullName evidence="1">Trigger factor</fullName>
        <shortName evidence="1">TF</shortName>
        <ecNumber evidence="1">5.2.1.8</ecNumber>
    </recommendedName>
    <alternativeName>
        <fullName evidence="1">PPIase</fullName>
    </alternativeName>
</protein>
<comment type="function">
    <text evidence="1">Involved in protein export. Acts as a chaperone by maintaining the newly synthesized protein in an open conformation. Functions as a peptidyl-prolyl cis-trans isomerase.</text>
</comment>
<comment type="catalytic activity">
    <reaction evidence="1">
        <text>[protein]-peptidylproline (omega=180) = [protein]-peptidylproline (omega=0)</text>
        <dbReference type="Rhea" id="RHEA:16237"/>
        <dbReference type="Rhea" id="RHEA-COMP:10747"/>
        <dbReference type="Rhea" id="RHEA-COMP:10748"/>
        <dbReference type="ChEBI" id="CHEBI:83833"/>
        <dbReference type="ChEBI" id="CHEBI:83834"/>
        <dbReference type="EC" id="5.2.1.8"/>
    </reaction>
</comment>
<comment type="subcellular location">
    <subcellularLocation>
        <location>Cytoplasm</location>
    </subcellularLocation>
    <text evidence="1">About half TF is bound to the ribosome near the polypeptide exit tunnel while the other half is free in the cytoplasm.</text>
</comment>
<comment type="domain">
    <text evidence="1">Consists of 3 domains; the N-terminus binds the ribosome, the middle domain has PPIase activity, while the C-terminus has intrinsic chaperone activity on its own.</text>
</comment>
<comment type="similarity">
    <text evidence="1">Belongs to the FKBP-type PPIase family. Tig subfamily.</text>
</comment>
<comment type="sequence caution" evidence="3">
    <conflict type="erroneous initiation">
        <sequence resource="EMBL-CDS" id="ABS14996"/>
    </conflict>
</comment>
<proteinExistence type="inferred from homology"/>
<keyword id="KW-0131">Cell cycle</keyword>
<keyword id="KW-0132">Cell division</keyword>
<keyword id="KW-0143">Chaperone</keyword>
<keyword id="KW-0963">Cytoplasm</keyword>
<keyword id="KW-0413">Isomerase</keyword>
<keyword id="KW-1185">Reference proteome</keyword>
<keyword id="KW-0697">Rotamase</keyword>
<evidence type="ECO:0000255" key="1">
    <source>
        <dbReference type="HAMAP-Rule" id="MF_00303"/>
    </source>
</evidence>
<evidence type="ECO:0000256" key="2">
    <source>
        <dbReference type="SAM" id="MobiDB-lite"/>
    </source>
</evidence>
<evidence type="ECO:0000305" key="3"/>
<organism>
    <name type="scientific">Brucella anthropi (strain ATCC 49188 / DSM 6882 / CCUG 24695 / JCM 21032 / LMG 3331 / NBRC 15819 / NCTC 12168 / Alc 37)</name>
    <name type="common">Ochrobactrum anthropi</name>
    <dbReference type="NCBI Taxonomy" id="439375"/>
    <lineage>
        <taxon>Bacteria</taxon>
        <taxon>Pseudomonadati</taxon>
        <taxon>Pseudomonadota</taxon>
        <taxon>Alphaproteobacteria</taxon>
        <taxon>Hyphomicrobiales</taxon>
        <taxon>Brucellaceae</taxon>
        <taxon>Brucella/Ochrobactrum group</taxon>
        <taxon>Brucella</taxon>
    </lineage>
</organism>
<feature type="chain" id="PRO_0000322447" description="Trigger factor">
    <location>
        <begin position="1"/>
        <end position="477"/>
    </location>
</feature>
<feature type="domain" description="PPIase FKBP-type" evidence="1">
    <location>
        <begin position="169"/>
        <end position="254"/>
    </location>
</feature>
<feature type="region of interest" description="Disordered" evidence="2">
    <location>
        <begin position="435"/>
        <end position="477"/>
    </location>
</feature>
<feature type="compositionally biased region" description="Basic residues" evidence="2">
    <location>
        <begin position="454"/>
        <end position="466"/>
    </location>
</feature>
<feature type="compositionally biased region" description="Basic and acidic residues" evidence="2">
    <location>
        <begin position="467"/>
        <end position="477"/>
    </location>
</feature>
<gene>
    <name evidence="1" type="primary">tig</name>
    <name type="ordered locus">Oant_2280</name>
</gene>
<accession>A6X192</accession>
<dbReference type="EC" id="5.2.1.8" evidence="1"/>
<dbReference type="EMBL" id="CP000758">
    <property type="protein sequence ID" value="ABS14996.1"/>
    <property type="status" value="ALT_INIT"/>
    <property type="molecule type" value="Genomic_DNA"/>
</dbReference>
<dbReference type="SMR" id="A6X192"/>
<dbReference type="STRING" id="439375.Oant_2280"/>
<dbReference type="KEGG" id="oan:Oant_2280"/>
<dbReference type="PATRIC" id="fig|439375.7.peg.2400"/>
<dbReference type="eggNOG" id="COG0544">
    <property type="taxonomic scope" value="Bacteria"/>
</dbReference>
<dbReference type="HOGENOM" id="CLU_033058_2_2_5"/>
<dbReference type="PhylomeDB" id="A6X192"/>
<dbReference type="Proteomes" id="UP000002301">
    <property type="component" value="Chromosome 1"/>
</dbReference>
<dbReference type="GO" id="GO:0005737">
    <property type="term" value="C:cytoplasm"/>
    <property type="evidence" value="ECO:0007669"/>
    <property type="project" value="UniProtKB-SubCell"/>
</dbReference>
<dbReference type="GO" id="GO:0003755">
    <property type="term" value="F:peptidyl-prolyl cis-trans isomerase activity"/>
    <property type="evidence" value="ECO:0007669"/>
    <property type="project" value="UniProtKB-UniRule"/>
</dbReference>
<dbReference type="GO" id="GO:0044183">
    <property type="term" value="F:protein folding chaperone"/>
    <property type="evidence" value="ECO:0007669"/>
    <property type="project" value="TreeGrafter"/>
</dbReference>
<dbReference type="GO" id="GO:0043022">
    <property type="term" value="F:ribosome binding"/>
    <property type="evidence" value="ECO:0007669"/>
    <property type="project" value="TreeGrafter"/>
</dbReference>
<dbReference type="GO" id="GO:0051083">
    <property type="term" value="P:'de novo' cotranslational protein folding"/>
    <property type="evidence" value="ECO:0007669"/>
    <property type="project" value="TreeGrafter"/>
</dbReference>
<dbReference type="GO" id="GO:0051301">
    <property type="term" value="P:cell division"/>
    <property type="evidence" value="ECO:0007669"/>
    <property type="project" value="UniProtKB-KW"/>
</dbReference>
<dbReference type="GO" id="GO:0061077">
    <property type="term" value="P:chaperone-mediated protein folding"/>
    <property type="evidence" value="ECO:0007669"/>
    <property type="project" value="TreeGrafter"/>
</dbReference>
<dbReference type="GO" id="GO:0015031">
    <property type="term" value="P:protein transport"/>
    <property type="evidence" value="ECO:0007669"/>
    <property type="project" value="UniProtKB-UniRule"/>
</dbReference>
<dbReference type="GO" id="GO:0043335">
    <property type="term" value="P:protein unfolding"/>
    <property type="evidence" value="ECO:0007669"/>
    <property type="project" value="TreeGrafter"/>
</dbReference>
<dbReference type="FunFam" id="3.10.50.40:FF:000001">
    <property type="entry name" value="Trigger factor"/>
    <property type="match status" value="1"/>
</dbReference>
<dbReference type="Gene3D" id="3.10.50.40">
    <property type="match status" value="1"/>
</dbReference>
<dbReference type="Gene3D" id="3.30.70.1050">
    <property type="entry name" value="Trigger factor ribosome-binding domain"/>
    <property type="match status" value="1"/>
</dbReference>
<dbReference type="Gene3D" id="1.10.3120.10">
    <property type="entry name" value="Trigger factor, C-terminal domain"/>
    <property type="match status" value="1"/>
</dbReference>
<dbReference type="HAMAP" id="MF_00303">
    <property type="entry name" value="Trigger_factor_Tig"/>
    <property type="match status" value="1"/>
</dbReference>
<dbReference type="InterPro" id="IPR046357">
    <property type="entry name" value="PPIase_dom_sf"/>
</dbReference>
<dbReference type="InterPro" id="IPR001179">
    <property type="entry name" value="PPIase_FKBP_dom"/>
</dbReference>
<dbReference type="InterPro" id="IPR005215">
    <property type="entry name" value="Trig_fac"/>
</dbReference>
<dbReference type="InterPro" id="IPR008880">
    <property type="entry name" value="Trigger_fac_C"/>
</dbReference>
<dbReference type="InterPro" id="IPR037041">
    <property type="entry name" value="Trigger_fac_C_sf"/>
</dbReference>
<dbReference type="InterPro" id="IPR008881">
    <property type="entry name" value="Trigger_fac_ribosome-bd_bac"/>
</dbReference>
<dbReference type="InterPro" id="IPR036611">
    <property type="entry name" value="Trigger_fac_ribosome-bd_sf"/>
</dbReference>
<dbReference type="InterPro" id="IPR027304">
    <property type="entry name" value="Trigger_fact/SurA_dom_sf"/>
</dbReference>
<dbReference type="NCBIfam" id="TIGR00115">
    <property type="entry name" value="tig"/>
    <property type="match status" value="1"/>
</dbReference>
<dbReference type="PANTHER" id="PTHR30560">
    <property type="entry name" value="TRIGGER FACTOR CHAPERONE AND PEPTIDYL-PROLYL CIS/TRANS ISOMERASE"/>
    <property type="match status" value="1"/>
</dbReference>
<dbReference type="PANTHER" id="PTHR30560:SF3">
    <property type="entry name" value="TRIGGER FACTOR-LIKE PROTEIN TIG, CHLOROPLASTIC"/>
    <property type="match status" value="1"/>
</dbReference>
<dbReference type="Pfam" id="PF00254">
    <property type="entry name" value="FKBP_C"/>
    <property type="match status" value="1"/>
</dbReference>
<dbReference type="Pfam" id="PF05698">
    <property type="entry name" value="Trigger_C"/>
    <property type="match status" value="1"/>
</dbReference>
<dbReference type="Pfam" id="PF05697">
    <property type="entry name" value="Trigger_N"/>
    <property type="match status" value="1"/>
</dbReference>
<dbReference type="PIRSF" id="PIRSF003095">
    <property type="entry name" value="Trigger_factor"/>
    <property type="match status" value="1"/>
</dbReference>
<dbReference type="SUPFAM" id="SSF54534">
    <property type="entry name" value="FKBP-like"/>
    <property type="match status" value="1"/>
</dbReference>
<dbReference type="SUPFAM" id="SSF109998">
    <property type="entry name" value="Triger factor/SurA peptide-binding domain-like"/>
    <property type="match status" value="1"/>
</dbReference>
<dbReference type="SUPFAM" id="SSF102735">
    <property type="entry name" value="Trigger factor ribosome-binding domain"/>
    <property type="match status" value="1"/>
</dbReference>
<dbReference type="PROSITE" id="PS50059">
    <property type="entry name" value="FKBP_PPIASE"/>
    <property type="match status" value="1"/>
</dbReference>
<sequence>MQVTETLNEGLKREIKVVVPAKDLEAKLAERLETARDRAKINGFRPGKVPAAHLRKMYGKSFMAEIVNEILNDSSRSLLAERNEKSATQPEVIMSEDEKEAEQVLDGKADFVFSLNYEVLPAIEVKDFSKIAVTREVVDISDEEVDDQVKRIASSTRAFETKKGKAENEDRVTIDYLGKLDGEPFEGGADNDAQLVLGSGQFIPGFEEQLVGVKAGDEKVITVTFPAEYGAAHLAGKEATFDITVKEVAKPNELVLDDETAKKLGIESLERLRQVVREQIESQYGQITRQKVKRQILDALDGDYQFATPQKLVDAEFNNIWQQINFDLQQAGRTFEDEETTEEAAREEYRKLAERRVRLGLVLSEIGEKAGVEVSEEELQRAVYDQVRRYPGQEKEIYEFLRKTPDAVANLRAPIFEEKVVDHLLANISVTDKKVSKEELTAEDEDAASEAKPAKKAAPKKKAAPKKKADEGKSEEA</sequence>